<reference key="1">
    <citation type="journal article" date="1995" name="Virology">
        <title>Nucleotide sequence and transcription of the left early region of Streptococcus pneumoniae bacteriophage Cp-1 coding for the terminal protein and the DNA polymerase.</title>
        <authorList>
            <person name="Martin A.C."/>
            <person name="Lopez R."/>
            <person name="Garcia P."/>
        </authorList>
    </citation>
    <scope>NUCLEOTIDE SEQUENCE [GENOMIC DNA]</scope>
</reference>
<reference key="2">
    <citation type="journal article" date="1986" name="J. Virol.">
        <title>Formation of a covalent complex between the terminal protein of pneumococcal bacteriophage Cp-1 and 5'-dAMP.</title>
        <authorList>
            <person name="Garcia P."/>
            <person name="Hermoso J.M."/>
            <person name="Garcia J.A."/>
            <person name="Garcia E."/>
            <person name="Lopez R."/>
            <person name="Salas M."/>
        </authorList>
    </citation>
    <scope>FUNCTION</scope>
    <scope>COVALENT DNA LINKAGE</scope>
</reference>
<reference key="3">
    <citation type="journal article" date="1996" name="J. Mol. Biol.">
        <title>In vitro protein-primed initiation of pneumococcal phage Cp-1 DNA replication occurs at the third 3' nucleotide of the linear template: a stepwise sliding-back mechanism.</title>
        <authorList>
            <person name="Martin A.C."/>
            <person name="Blanco L."/>
            <person name="Garcia P."/>
            <person name="Salas M."/>
            <person name="Mendez J."/>
        </authorList>
    </citation>
    <scope>FUNCTION</scope>
</reference>
<reference key="4">
    <citation type="journal article" date="2012" name="Proc. Natl. Acad. Sci. U.S.A.">
        <title>Functional eukaryotic nuclear localization signals are widespread in terminal proteins of bacteriophages.</title>
        <authorList>
            <person name="Redrejo-Rodriguez M."/>
            <person name="Munoz-Espin D."/>
            <person name="Holguera I."/>
            <person name="Mencia M."/>
            <person name="Salas M."/>
        </authorList>
    </citation>
    <scope>SUBCELLULAR LOCATION</scope>
    <scope>NUCLEAR LOCALIZATION SIGNAL</scope>
</reference>
<proteinExistence type="predicted"/>
<accession>Q37988</accession>
<keyword id="KW-0190">Covalent protein-DNA linkage</keyword>
<keyword id="KW-0235">DNA replication</keyword>
<keyword id="KW-1048">Host nucleus</keyword>
<keyword id="KW-1185">Reference proteome</keyword>
<keyword id="KW-0946">Virion</keyword>
<dbReference type="EMBL" id="Z47794">
    <property type="protein sequence ID" value="CAA87724.1"/>
    <property type="molecule type" value="Genomic_DNA"/>
</dbReference>
<dbReference type="PIR" id="S51274">
    <property type="entry name" value="S51274"/>
</dbReference>
<dbReference type="RefSeq" id="NP_044816.1">
    <property type="nucleotide sequence ID" value="NC_001825.1"/>
</dbReference>
<dbReference type="SMR" id="Q37988"/>
<dbReference type="KEGG" id="vg:1261228"/>
<dbReference type="OrthoDB" id="30108at10239"/>
<dbReference type="Proteomes" id="UP000009089">
    <property type="component" value="Genome"/>
</dbReference>
<dbReference type="GO" id="GO:0042025">
    <property type="term" value="C:host cell nucleus"/>
    <property type="evidence" value="ECO:0007669"/>
    <property type="project" value="UniProtKB-SubCell"/>
</dbReference>
<dbReference type="GO" id="GO:0044423">
    <property type="term" value="C:virion component"/>
    <property type="evidence" value="ECO:0007669"/>
    <property type="project" value="UniProtKB-KW"/>
</dbReference>
<dbReference type="GO" id="GO:0006260">
    <property type="term" value="P:DNA replication"/>
    <property type="evidence" value="ECO:0007669"/>
    <property type="project" value="UniProtKB-KW"/>
</dbReference>
<evidence type="ECO:0000269" key="1">
    <source>
    </source>
</evidence>
<evidence type="ECO:0000269" key="2">
    <source>
    </source>
</evidence>
<evidence type="ECO:0000269" key="3">
    <source>
    </source>
</evidence>
<evidence type="ECO:0000305" key="4"/>
<sequence length="230" mass="26898">MALTPKQRKVRRDYLTRKKRTLQQQGASNAEIKAFMGGRWNFAGMSDKALERAYDEIKSKGRTQVFGNHVYTSDYVKKAKAWYGDKFSVEKLTQGFRSSQRSELNRFHSVKEVKEYRSERDREAKERYIQALEEMHYNTRDAGNKAQEKAFKSMISRIRRMSASNFGAFLTGGRSDKVSFDNVMVFVDTDGKETAFEFQDSLAREILDNVDKFSKQFVSDMRRRKKRGKK</sequence>
<comment type="function">
    <text evidence="2 3">DNA terminal protein is linked to the 5'-ends of both strands of the genome through a phosphodiester bond between the beta-hydroxyl group of a threonine residue and the 5'-phosphate of the terminal deoxyadenylate (PubMed:3081736). This protein is essential for DNA replication and is involved in the priming of DNA elongation (PubMed:8757800).</text>
</comment>
<comment type="subcellular location">
    <subcellularLocation>
        <location evidence="1">Host nucleus</location>
    </subcellularLocation>
    <subcellularLocation>
        <location evidence="4">Virion</location>
    </subcellularLocation>
</comment>
<feature type="chain" id="PRO_0000106553" description="Terminal protein">
    <location>
        <begin position="1"/>
        <end position="230"/>
    </location>
</feature>
<feature type="short sequence motif" description="Nuclear localization signal" evidence="1">
    <location>
        <begin position="222"/>
        <end position="230"/>
    </location>
</feature>
<name>TERM_BPCP1</name>
<protein>
    <recommendedName>
        <fullName>Terminal protein</fullName>
    </recommendedName>
</protein>
<gene>
    <name type="primary">4</name>
</gene>
<organismHost>
    <name type="scientific">Streptococcus pneumoniae</name>
    <dbReference type="NCBI Taxonomy" id="1313"/>
</organismHost>
<organism>
    <name type="scientific">Streptococcus phage Cp-1</name>
    <name type="common">Bacteriophage Cp-1</name>
    <dbReference type="NCBI Taxonomy" id="10747"/>
    <lineage>
        <taxon>Viruses</taxon>
        <taxon>Duplodnaviria</taxon>
        <taxon>Heunggongvirae</taxon>
        <taxon>Uroviricota</taxon>
        <taxon>Caudoviricetes</taxon>
        <taxon>Salasmaviridae</taxon>
        <taxon>Cepunavirus</taxon>
        <taxon>Cepunavirus Cp1</taxon>
    </lineage>
</organism>